<protein>
    <recommendedName>
        <fullName>Uncharacterized oxidoreductase SACOL2488</fullName>
        <ecNumber>1.-.-.-</ecNumber>
    </recommendedName>
</protein>
<evidence type="ECO:0000250" key="1"/>
<evidence type="ECO:0000305" key="2"/>
<sequence>MTVLTDKVAVVTGAGSGIGEAIATLLHEEGAKVVLAGRNKEKLQNVANQLSQDSVKVVPTDVTNKEEVDELIKIAQQTFGGLDIVINSAGQMLSSKITDYQVDEWDSMIDVNIKGTLYTAQAALPTMLEQSSGHLINIASISGFEVTKSSTIYSATKAAVHTITQGLEKELAKTGVKVTSISPGMVDTAITAAYNPTDRKKLEPQDIAEAVLYALTQPKHVNVNEITVRPV</sequence>
<organism>
    <name type="scientific">Staphylococcus aureus (strain COL)</name>
    <dbReference type="NCBI Taxonomy" id="93062"/>
    <lineage>
        <taxon>Bacteria</taxon>
        <taxon>Bacillati</taxon>
        <taxon>Bacillota</taxon>
        <taxon>Bacilli</taxon>
        <taxon>Bacillales</taxon>
        <taxon>Staphylococcaceae</taxon>
        <taxon>Staphylococcus</taxon>
    </lineage>
</organism>
<accession>Q5HD73</accession>
<name>Y2488_STAAC</name>
<keyword id="KW-0560">Oxidoreductase</keyword>
<dbReference type="EC" id="1.-.-.-"/>
<dbReference type="EMBL" id="CP000046">
    <property type="protein sequence ID" value="AAW37268.1"/>
    <property type="molecule type" value="Genomic_DNA"/>
</dbReference>
<dbReference type="RefSeq" id="WP_000217466.1">
    <property type="nucleotide sequence ID" value="NZ_JBGOFO010000004.1"/>
</dbReference>
<dbReference type="SMR" id="Q5HD73"/>
<dbReference type="KEGG" id="sac:SACOL2488"/>
<dbReference type="HOGENOM" id="CLU_010194_2_10_9"/>
<dbReference type="Proteomes" id="UP000000530">
    <property type="component" value="Chromosome"/>
</dbReference>
<dbReference type="GO" id="GO:0016491">
    <property type="term" value="F:oxidoreductase activity"/>
    <property type="evidence" value="ECO:0007669"/>
    <property type="project" value="UniProtKB-KW"/>
</dbReference>
<dbReference type="CDD" id="cd05233">
    <property type="entry name" value="SDR_c"/>
    <property type="match status" value="1"/>
</dbReference>
<dbReference type="FunFam" id="3.40.50.720:FF:000047">
    <property type="entry name" value="NADP-dependent L-serine/L-allo-threonine dehydrogenase"/>
    <property type="match status" value="1"/>
</dbReference>
<dbReference type="Gene3D" id="3.40.50.720">
    <property type="entry name" value="NAD(P)-binding Rossmann-like Domain"/>
    <property type="match status" value="1"/>
</dbReference>
<dbReference type="InterPro" id="IPR036291">
    <property type="entry name" value="NAD(P)-bd_dom_sf"/>
</dbReference>
<dbReference type="InterPro" id="IPR002347">
    <property type="entry name" value="SDR_fam"/>
</dbReference>
<dbReference type="PANTHER" id="PTHR43115">
    <property type="entry name" value="DEHYDROGENASE/REDUCTASE SDR FAMILY MEMBER 11"/>
    <property type="match status" value="1"/>
</dbReference>
<dbReference type="PANTHER" id="PTHR43115:SF4">
    <property type="entry name" value="DEHYDROGENASE_REDUCTASE SDR FAMILY MEMBER 11"/>
    <property type="match status" value="1"/>
</dbReference>
<dbReference type="Pfam" id="PF00106">
    <property type="entry name" value="adh_short"/>
    <property type="match status" value="1"/>
</dbReference>
<dbReference type="PRINTS" id="PR00081">
    <property type="entry name" value="GDHRDH"/>
</dbReference>
<dbReference type="PRINTS" id="PR00080">
    <property type="entry name" value="SDRFAMILY"/>
</dbReference>
<dbReference type="SUPFAM" id="SSF51735">
    <property type="entry name" value="NAD(P)-binding Rossmann-fold domains"/>
    <property type="match status" value="1"/>
</dbReference>
<reference key="1">
    <citation type="journal article" date="2005" name="J. Bacteriol.">
        <title>Insights on evolution of virulence and resistance from the complete genome analysis of an early methicillin-resistant Staphylococcus aureus strain and a biofilm-producing methicillin-resistant Staphylococcus epidermidis strain.</title>
        <authorList>
            <person name="Gill S.R."/>
            <person name="Fouts D.E."/>
            <person name="Archer G.L."/>
            <person name="Mongodin E.F."/>
            <person name="DeBoy R.T."/>
            <person name="Ravel J."/>
            <person name="Paulsen I.T."/>
            <person name="Kolonay J.F."/>
            <person name="Brinkac L.M."/>
            <person name="Beanan M.J."/>
            <person name="Dodson R.J."/>
            <person name="Daugherty S.C."/>
            <person name="Madupu R."/>
            <person name="Angiuoli S.V."/>
            <person name="Durkin A.S."/>
            <person name="Haft D.H."/>
            <person name="Vamathevan J.J."/>
            <person name="Khouri H."/>
            <person name="Utterback T.R."/>
            <person name="Lee C."/>
            <person name="Dimitrov G."/>
            <person name="Jiang L."/>
            <person name="Qin H."/>
            <person name="Weidman J."/>
            <person name="Tran K."/>
            <person name="Kang K.H."/>
            <person name="Hance I.R."/>
            <person name="Nelson K.E."/>
            <person name="Fraser C.M."/>
        </authorList>
    </citation>
    <scope>NUCLEOTIDE SEQUENCE [LARGE SCALE GENOMIC DNA]</scope>
    <source>
        <strain>COL</strain>
    </source>
</reference>
<feature type="chain" id="PRO_0000300470" description="Uncharacterized oxidoreductase SACOL2488">
    <location>
        <begin position="1"/>
        <end position="231"/>
    </location>
</feature>
<feature type="active site" description="Proton acceptor" evidence="1">
    <location>
        <position position="153"/>
    </location>
</feature>
<feature type="binding site" evidence="1">
    <location>
        <begin position="10"/>
        <end position="34"/>
    </location>
    <ligand>
        <name>NADP(+)</name>
        <dbReference type="ChEBI" id="CHEBI:58349"/>
    </ligand>
</feature>
<feature type="binding site" evidence="1">
    <location>
        <position position="140"/>
    </location>
    <ligand>
        <name>substrate</name>
    </ligand>
</feature>
<proteinExistence type="inferred from homology"/>
<gene>
    <name type="ordered locus">SACOL2488</name>
</gene>
<comment type="similarity">
    <text evidence="2">Belongs to the short-chain dehydrogenases/reductases (SDR) family.</text>
</comment>